<feature type="chain" id="PRO_0000065496" description="Protein CLASP-3">
    <location>
        <begin position="1"/>
        <end position="983"/>
    </location>
</feature>
<feature type="repeat" description="HEAT">
    <location>
        <begin position="918"/>
        <end position="956"/>
    </location>
</feature>
<feature type="region of interest" description="Disordered" evidence="2">
    <location>
        <begin position="356"/>
        <end position="393"/>
    </location>
</feature>
<feature type="region of interest" description="Disordered" evidence="2">
    <location>
        <begin position="666"/>
        <end position="690"/>
    </location>
</feature>
<feature type="compositionally biased region" description="Low complexity" evidence="2">
    <location>
        <begin position="359"/>
        <end position="372"/>
    </location>
</feature>
<dbReference type="EMBL" id="Z19157">
    <property type="protein sequence ID" value="CAA79568.2"/>
    <property type="molecule type" value="Genomic_DNA"/>
</dbReference>
<dbReference type="PIR" id="C88550">
    <property type="entry name" value="C88550"/>
</dbReference>
<dbReference type="PIR" id="S28293">
    <property type="entry name" value="S28293"/>
</dbReference>
<dbReference type="PIR" id="S28294">
    <property type="entry name" value="S28294"/>
</dbReference>
<dbReference type="RefSeq" id="NP_001379049.1">
    <property type="nucleotide sequence ID" value="NM_001392172.1"/>
</dbReference>
<dbReference type="RefSeq" id="NP_499034.2">
    <property type="nucleotide sequence ID" value="NM_066633.4"/>
</dbReference>
<dbReference type="BioGRID" id="41497">
    <property type="interactions" value="7"/>
</dbReference>
<dbReference type="FunCoup" id="Q03609">
    <property type="interactions" value="2694"/>
</dbReference>
<dbReference type="STRING" id="6239.ZC84.3.2"/>
<dbReference type="PaxDb" id="6239-ZC84.3"/>
<dbReference type="PeptideAtlas" id="Q03609"/>
<dbReference type="EnsemblMetazoa" id="ZC84.3.1">
    <property type="protein sequence ID" value="ZC84.3.1"/>
    <property type="gene ID" value="WBGene00013847"/>
</dbReference>
<dbReference type="GeneID" id="176298"/>
<dbReference type="UCSC" id="ZC84.3">
    <property type="organism name" value="c. elegans"/>
</dbReference>
<dbReference type="AGR" id="WB:WBGene00013847"/>
<dbReference type="WormBase" id="ZC84.3">
    <property type="protein sequence ID" value="CE43505"/>
    <property type="gene ID" value="WBGene00013847"/>
    <property type="gene designation" value="cls-3"/>
</dbReference>
<dbReference type="eggNOG" id="KOG2956">
    <property type="taxonomic scope" value="Eukaryota"/>
</dbReference>
<dbReference type="GeneTree" id="ENSGT00940000168069"/>
<dbReference type="HOGENOM" id="CLU_005060_1_0_1"/>
<dbReference type="InParanoid" id="Q03609"/>
<dbReference type="OMA" id="LEVYAVF"/>
<dbReference type="OrthoDB" id="46159at2759"/>
<dbReference type="PhylomeDB" id="Q03609"/>
<dbReference type="PRO" id="PR:Q03609"/>
<dbReference type="Proteomes" id="UP000001940">
    <property type="component" value="Chromosome III"/>
</dbReference>
<dbReference type="Bgee" id="WBGene00013847">
    <property type="expression patterns" value="Expressed in embryo and 3 other cell types or tissues"/>
</dbReference>
<dbReference type="GO" id="GO:0045180">
    <property type="term" value="C:basal cortex"/>
    <property type="evidence" value="ECO:0000318"/>
    <property type="project" value="GO_Central"/>
</dbReference>
<dbReference type="GO" id="GO:0005881">
    <property type="term" value="C:cytoplasmic microtubule"/>
    <property type="evidence" value="ECO:0000318"/>
    <property type="project" value="GO_Central"/>
</dbReference>
<dbReference type="GO" id="GO:0000776">
    <property type="term" value="C:kinetochore"/>
    <property type="evidence" value="ECO:0000318"/>
    <property type="project" value="GO_Central"/>
</dbReference>
<dbReference type="GO" id="GO:0005815">
    <property type="term" value="C:microtubule organizing center"/>
    <property type="evidence" value="ECO:0000318"/>
    <property type="project" value="GO_Central"/>
</dbReference>
<dbReference type="GO" id="GO:0072686">
    <property type="term" value="C:mitotic spindle"/>
    <property type="evidence" value="ECO:0000318"/>
    <property type="project" value="GO_Central"/>
</dbReference>
<dbReference type="GO" id="GO:0005876">
    <property type="term" value="C:spindle microtubule"/>
    <property type="evidence" value="ECO:0000318"/>
    <property type="project" value="GO_Central"/>
</dbReference>
<dbReference type="GO" id="GO:0008017">
    <property type="term" value="F:microtubule binding"/>
    <property type="evidence" value="ECO:0000318"/>
    <property type="project" value="GO_Central"/>
</dbReference>
<dbReference type="GO" id="GO:0030953">
    <property type="term" value="P:astral microtubule organization"/>
    <property type="evidence" value="ECO:0000316"/>
    <property type="project" value="WormBase"/>
</dbReference>
<dbReference type="GO" id="GO:0040001">
    <property type="term" value="P:establishment of mitotic spindle localization"/>
    <property type="evidence" value="ECO:0000316"/>
    <property type="project" value="WormBase"/>
</dbReference>
<dbReference type="GO" id="GO:0090307">
    <property type="term" value="P:mitotic spindle assembly"/>
    <property type="evidence" value="ECO:0000318"/>
    <property type="project" value="GO_Central"/>
</dbReference>
<dbReference type="FunFam" id="1.25.10.10:FF:000607">
    <property type="entry name" value="Protein CLASP-2"/>
    <property type="match status" value="1"/>
</dbReference>
<dbReference type="Gene3D" id="1.25.10.10">
    <property type="entry name" value="Leucine-rich Repeat Variant"/>
    <property type="match status" value="3"/>
</dbReference>
<dbReference type="InterPro" id="IPR011989">
    <property type="entry name" value="ARM-like"/>
</dbReference>
<dbReference type="InterPro" id="IPR016024">
    <property type="entry name" value="ARM-type_fold"/>
</dbReference>
<dbReference type="InterPro" id="IPR024395">
    <property type="entry name" value="CLASP_N_dom"/>
</dbReference>
<dbReference type="InterPro" id="IPR034085">
    <property type="entry name" value="TOG"/>
</dbReference>
<dbReference type="PANTHER" id="PTHR21567">
    <property type="entry name" value="CLASP"/>
    <property type="match status" value="1"/>
</dbReference>
<dbReference type="PANTHER" id="PTHR21567:SF34">
    <property type="entry name" value="PROTEIN CLASP-3"/>
    <property type="match status" value="1"/>
</dbReference>
<dbReference type="Pfam" id="PF12348">
    <property type="entry name" value="CLASP_N"/>
    <property type="match status" value="1"/>
</dbReference>
<dbReference type="SMART" id="SM01349">
    <property type="entry name" value="TOG"/>
    <property type="match status" value="2"/>
</dbReference>
<dbReference type="SUPFAM" id="SSF48371">
    <property type="entry name" value="ARM repeat"/>
    <property type="match status" value="1"/>
</dbReference>
<gene>
    <name type="primary">cls-3</name>
    <name type="ORF">ZC84.3</name>
</gene>
<name>CLAP3_CAEEL</name>
<evidence type="ECO:0000250" key="1"/>
<evidence type="ECO:0000256" key="2">
    <source>
        <dbReference type="SAM" id="MobiDB-lite"/>
    </source>
</evidence>
<evidence type="ECO:0000305" key="3"/>
<reference key="1">
    <citation type="journal article" date="1994" name="Nature">
        <title>2.2 Mb of contiguous nucleotide sequence from chromosome III of C. elegans.</title>
        <authorList>
            <person name="Wilson R."/>
            <person name="Ainscough R."/>
            <person name="Anderson K."/>
            <person name="Baynes C."/>
            <person name="Berks M."/>
            <person name="Bonfield J."/>
            <person name="Burton J."/>
            <person name="Connell M."/>
            <person name="Copsey T."/>
            <person name="Cooper J."/>
            <person name="Coulson A."/>
            <person name="Craxton M."/>
            <person name="Dear S."/>
            <person name="Du Z."/>
            <person name="Durbin R."/>
            <person name="Favello A."/>
            <person name="Fraser A."/>
            <person name="Fulton L."/>
            <person name="Gardner A."/>
            <person name="Green P."/>
            <person name="Hawkins T."/>
            <person name="Hillier L."/>
            <person name="Jier M."/>
            <person name="Johnston L."/>
            <person name="Jones M."/>
            <person name="Kershaw J."/>
            <person name="Kirsten J."/>
            <person name="Laisster N."/>
            <person name="Latreille P."/>
            <person name="Lightning J."/>
            <person name="Lloyd C."/>
            <person name="Mortimore B."/>
            <person name="O'Callaghan M."/>
            <person name="Parsons J."/>
            <person name="Percy C."/>
            <person name="Rifken L."/>
            <person name="Roopra A."/>
            <person name="Saunders D."/>
            <person name="Shownkeen R."/>
            <person name="Sims M."/>
            <person name="Smaldon N."/>
            <person name="Smith A."/>
            <person name="Smith M."/>
            <person name="Sonnhammer E."/>
            <person name="Staden R."/>
            <person name="Sulston J."/>
            <person name="Thierry-Mieg J."/>
            <person name="Thomas K."/>
            <person name="Vaudin M."/>
            <person name="Vaughan K."/>
            <person name="Waterston R."/>
            <person name="Watson A."/>
            <person name="Weinstock L."/>
            <person name="Wilkinson-Sproat J."/>
            <person name="Wohldman P."/>
        </authorList>
    </citation>
    <scope>NUCLEOTIDE SEQUENCE [LARGE SCALE GENOMIC DNA]</scope>
    <source>
        <strain>Bristol N2</strain>
    </source>
</reference>
<reference key="2">
    <citation type="journal article" date="1998" name="Science">
        <title>Genome sequence of the nematode C. elegans: a platform for investigating biology.</title>
        <authorList>
            <consortium name="The C. elegans sequencing consortium"/>
        </authorList>
    </citation>
    <scope>NUCLEOTIDE SEQUENCE [LARGE SCALE GENOMIC DNA]</scope>
    <source>
        <strain>Bristol N2</strain>
    </source>
</reference>
<comment type="function">
    <text evidence="1">Microtubule plus-end tracking protein that promotes the stabilization of dynamic microtubules.</text>
</comment>
<comment type="subcellular location">
    <subcellularLocation>
        <location evidence="1">Cytoplasm</location>
        <location evidence="1">Cytoskeleton</location>
    </subcellularLocation>
</comment>
<comment type="similarity">
    <text evidence="3">Belongs to the CLASP family.</text>
</comment>
<organism>
    <name type="scientific">Caenorhabditis elegans</name>
    <dbReference type="NCBI Taxonomy" id="6239"/>
    <lineage>
        <taxon>Eukaryota</taxon>
        <taxon>Metazoa</taxon>
        <taxon>Ecdysozoa</taxon>
        <taxon>Nematoda</taxon>
        <taxon>Chromadorea</taxon>
        <taxon>Rhabditida</taxon>
        <taxon>Rhabditina</taxon>
        <taxon>Rhabditomorpha</taxon>
        <taxon>Rhabditoidea</taxon>
        <taxon>Rhabditidae</taxon>
        <taxon>Peloderinae</taxon>
        <taxon>Caenorhabditis</taxon>
    </lineage>
</organism>
<keyword id="KW-0963">Cytoplasm</keyword>
<keyword id="KW-0206">Cytoskeleton</keyword>
<keyword id="KW-0493">Microtubule</keyword>
<keyword id="KW-1185">Reference proteome</keyword>
<accession>Q03609</accession>
<accession>P91845</accession>
<proteinExistence type="inferred from homology"/>
<sequence>MTSRMQPKSGVYSVSKADFTKIFEDVPKVPITSAVDLRNKFDAVRIILSNSSEDWNKRQTQLKTVRSLVIHGEKVVDRPTMIAHLVQLLGCFELAVKDLRSQVLREAAITCSFIVSKYGIETHSIGEDILVPAMSQVAVSTKIMATSASTLTEFIVEYVQTRQVFTILSSFSTSKDKSQRRQLAALLEIVISKWSDRIKKQIMRQICELIKSAINDADSETRAAGRRAFAKLDEMHSEEADALYLELDHSKQKMLRGGDAASSWASVNSEKGSIPIRSKLSAGSKAHMNISAKFLAQRSASAIDPKATKFAGPSRLVRPTSTKTMARQDTSPAGCKYSNFISMFFKTLLLSAKIPYPNRPGSRTRTSSITSTDSRDTSPTRRNSPLPPETQKARVKYGNGSFFAKLGMPDTTDDDEFLLPIRIRSPLKTPTIEAHDKVSQVLKECCSSSVSEKKEGIKKLLPIVADTSLNPIEIKNIGNCLNRLLSDASNTMVLEIYSIFVRTHSSRLSEWLRLALAKLFARKAAETLPNTKKQIGHTLNVILECFNAHHQLVTVCELMCDPIHLMVPKARVVLLEYLTSLLDEYTEPGASINAKELKTAIRKMLTWASDPRLSILLTPHVEKAICSMFCVNVADFSALISDLDSEQKNWIHQTLQRNGLENGISSNNIATNSGATASRETSNTSFQKESTSFGLPEFGARKGGTGVNLGSLNISNNLALSRLEEQSTSRLMEKVNLNSTVTLPPDTLEKIQNVQDLLQKMRSSENADEQESAISSIYMMICDGGFGVWEQCYAKLLLNLFEILSKSRSENNKKMCLRILGKMCTAQAAKLFDSTEMAVCKVLDAAVNTNDATTALAVEDCLRTLATHLPLSNIINIAKVILNQEPIDDERASLVLKMVTRLFEELPAEELNNIVDDITPTIIKAYQSTSSTVRKTVVYCLVAMVNRVGEQRMTPHFTKLPKAMTNLIQVYVNRAISTSLPRL</sequence>
<protein>
    <recommendedName>
        <fullName>Protein CLASP-3</fullName>
    </recommendedName>
</protein>